<accession>B6JN86</accession>
<feature type="chain" id="PRO_1000120760" description="Small ribosomal subunit protein bS6">
    <location>
        <begin position="1"/>
        <end position="142"/>
    </location>
</feature>
<feature type="region of interest" description="Disordered" evidence="2">
    <location>
        <begin position="110"/>
        <end position="142"/>
    </location>
</feature>
<feature type="compositionally biased region" description="Basic and acidic residues" evidence="2">
    <location>
        <begin position="110"/>
        <end position="133"/>
    </location>
</feature>
<evidence type="ECO:0000255" key="1">
    <source>
        <dbReference type="HAMAP-Rule" id="MF_00360"/>
    </source>
</evidence>
<evidence type="ECO:0000256" key="2">
    <source>
        <dbReference type="SAM" id="MobiDB-lite"/>
    </source>
</evidence>
<evidence type="ECO:0000305" key="3"/>
<proteinExistence type="inferred from homology"/>
<sequence>MRHYETMFILKPTLVEEEIKSKIEFYREVITKHHGVIETSLDMGMRNLAYEIKKHKRGYYYVAYFKAEPSMIVELERLYRINEDVLRFIVIKYESKKEVEAWHALVDRANKKPSHAKEKHEKTEHTHSHHAEEAESVGSHSE</sequence>
<reference key="1">
    <citation type="submission" date="2008-10" db="EMBL/GenBank/DDBJ databases">
        <title>The complete genome sequence of Helicobacter pylori strain P12.</title>
        <authorList>
            <person name="Fischer W."/>
            <person name="Windhager L."/>
            <person name="Karnholz A."/>
            <person name="Zeiller M."/>
            <person name="Zimmer R."/>
            <person name="Haas R."/>
        </authorList>
    </citation>
    <scope>NUCLEOTIDE SEQUENCE [LARGE SCALE GENOMIC DNA]</scope>
    <source>
        <strain>P12</strain>
    </source>
</reference>
<name>RS6_HELP2</name>
<dbReference type="EMBL" id="CP001217">
    <property type="protein sequence ID" value="ACJ08364.1"/>
    <property type="molecule type" value="Genomic_DNA"/>
</dbReference>
<dbReference type="SMR" id="B6JN86"/>
<dbReference type="KEGG" id="hpp:HPP12_1212"/>
<dbReference type="HOGENOM" id="CLU_113441_4_1_7"/>
<dbReference type="Proteomes" id="UP000008198">
    <property type="component" value="Chromosome"/>
</dbReference>
<dbReference type="GO" id="GO:0022627">
    <property type="term" value="C:cytosolic small ribosomal subunit"/>
    <property type="evidence" value="ECO:0007669"/>
    <property type="project" value="TreeGrafter"/>
</dbReference>
<dbReference type="GO" id="GO:0070181">
    <property type="term" value="F:small ribosomal subunit rRNA binding"/>
    <property type="evidence" value="ECO:0007669"/>
    <property type="project" value="TreeGrafter"/>
</dbReference>
<dbReference type="GO" id="GO:0003735">
    <property type="term" value="F:structural constituent of ribosome"/>
    <property type="evidence" value="ECO:0007669"/>
    <property type="project" value="InterPro"/>
</dbReference>
<dbReference type="GO" id="GO:0006412">
    <property type="term" value="P:translation"/>
    <property type="evidence" value="ECO:0007669"/>
    <property type="project" value="UniProtKB-UniRule"/>
</dbReference>
<dbReference type="CDD" id="cd00473">
    <property type="entry name" value="bS6"/>
    <property type="match status" value="1"/>
</dbReference>
<dbReference type="FunFam" id="3.30.70.60:FF:000010">
    <property type="entry name" value="30S ribosomal protein S6"/>
    <property type="match status" value="1"/>
</dbReference>
<dbReference type="Gene3D" id="3.30.70.60">
    <property type="match status" value="1"/>
</dbReference>
<dbReference type="HAMAP" id="MF_00360">
    <property type="entry name" value="Ribosomal_bS6"/>
    <property type="match status" value="1"/>
</dbReference>
<dbReference type="InterPro" id="IPR000529">
    <property type="entry name" value="Ribosomal_bS6"/>
</dbReference>
<dbReference type="InterPro" id="IPR020815">
    <property type="entry name" value="Ribosomal_bS6_CS"/>
</dbReference>
<dbReference type="InterPro" id="IPR035980">
    <property type="entry name" value="Ribosomal_bS6_sf"/>
</dbReference>
<dbReference type="InterPro" id="IPR020814">
    <property type="entry name" value="Ribosomal_S6_plastid/chlpt"/>
</dbReference>
<dbReference type="InterPro" id="IPR014717">
    <property type="entry name" value="Transl_elong_EF1B/ribsomal_bS6"/>
</dbReference>
<dbReference type="NCBIfam" id="TIGR00166">
    <property type="entry name" value="S6"/>
    <property type="match status" value="1"/>
</dbReference>
<dbReference type="PANTHER" id="PTHR21011">
    <property type="entry name" value="MITOCHONDRIAL 28S RIBOSOMAL PROTEIN S6"/>
    <property type="match status" value="1"/>
</dbReference>
<dbReference type="PANTHER" id="PTHR21011:SF1">
    <property type="entry name" value="SMALL RIBOSOMAL SUBUNIT PROTEIN BS6M"/>
    <property type="match status" value="1"/>
</dbReference>
<dbReference type="Pfam" id="PF01250">
    <property type="entry name" value="Ribosomal_S6"/>
    <property type="match status" value="1"/>
</dbReference>
<dbReference type="SUPFAM" id="SSF54995">
    <property type="entry name" value="Ribosomal protein S6"/>
    <property type="match status" value="1"/>
</dbReference>
<dbReference type="PROSITE" id="PS01048">
    <property type="entry name" value="RIBOSOMAL_S6"/>
    <property type="match status" value="1"/>
</dbReference>
<keyword id="KW-0687">Ribonucleoprotein</keyword>
<keyword id="KW-0689">Ribosomal protein</keyword>
<keyword id="KW-0694">RNA-binding</keyword>
<keyword id="KW-0699">rRNA-binding</keyword>
<protein>
    <recommendedName>
        <fullName evidence="1">Small ribosomal subunit protein bS6</fullName>
    </recommendedName>
    <alternativeName>
        <fullName evidence="3">30S ribosomal protein S6</fullName>
    </alternativeName>
</protein>
<gene>
    <name evidence="1" type="primary">rpsF</name>
    <name type="ordered locus">HPP12_1212</name>
</gene>
<organism>
    <name type="scientific">Helicobacter pylori (strain P12)</name>
    <dbReference type="NCBI Taxonomy" id="570508"/>
    <lineage>
        <taxon>Bacteria</taxon>
        <taxon>Pseudomonadati</taxon>
        <taxon>Campylobacterota</taxon>
        <taxon>Epsilonproteobacteria</taxon>
        <taxon>Campylobacterales</taxon>
        <taxon>Helicobacteraceae</taxon>
        <taxon>Helicobacter</taxon>
    </lineage>
</organism>
<comment type="function">
    <text evidence="1">Binds together with bS18 to 16S ribosomal RNA.</text>
</comment>
<comment type="similarity">
    <text evidence="1">Belongs to the bacterial ribosomal protein bS6 family.</text>
</comment>